<keyword id="KW-0963">Cytoplasm</keyword>
<keyword id="KW-0251">Elongation factor</keyword>
<keyword id="KW-0648">Protein biosynthesis</keyword>
<accession>Q74HT9</accession>
<gene>
    <name type="primary">efp1</name>
    <name type="ordered locus">LJ_0620</name>
</gene>
<protein>
    <recommendedName>
        <fullName>Elongation factor P 1</fullName>
        <shortName>EF-P 1</shortName>
    </recommendedName>
</protein>
<reference key="1">
    <citation type="journal article" date="2004" name="Proc. Natl. Acad. Sci. U.S.A.">
        <title>The genome sequence of the probiotic intestinal bacterium Lactobacillus johnsonii NCC 533.</title>
        <authorList>
            <person name="Pridmore R.D."/>
            <person name="Berger B."/>
            <person name="Desiere F."/>
            <person name="Vilanova D."/>
            <person name="Barretto C."/>
            <person name="Pittet A.-C."/>
            <person name="Zwahlen M.-C."/>
            <person name="Rouvet M."/>
            <person name="Altermann E."/>
            <person name="Barrangou R."/>
            <person name="Mollet B."/>
            <person name="Mercenier A."/>
            <person name="Klaenhammer T."/>
            <person name="Arigoni F."/>
            <person name="Schell M.A."/>
        </authorList>
    </citation>
    <scope>NUCLEOTIDE SEQUENCE [LARGE SCALE GENOMIC DNA]</scope>
    <source>
        <strain>CNCM I-1225 / La1 / NCC 533</strain>
    </source>
</reference>
<feature type="chain" id="PRO_0000094265" description="Elongation factor P 1">
    <location>
        <begin position="1"/>
        <end position="190"/>
    </location>
</feature>
<sequence>MQAIELKKGMIFNQDGKLIEVLKSNHHKPGKGNTVMQMDLRDVMSGAVVHKTMRPSEKVDLVNVSLKKAQYLYDDDTDFIFMDTDTYEQYLIPKEHLASEAKFLMPNIEVDLKFTDEGKLIGINLPSTVKMTVKETQPEIKGATAAGGGKPATMDTGLVVTVPDFIKEGEELIIGTENGDYKGRADSITR</sequence>
<comment type="function">
    <text evidence="1">Involved in peptide bond synthesis. Stimulates efficient translation and peptide-bond synthesis on native or reconstituted 70S ribosomes in vitro. Probably functions indirectly by altering the affinity of the ribosome for aminoacyl-tRNA, thus increasing their reactivity as acceptors for peptidyl transferase (By similarity).</text>
</comment>
<comment type="pathway">
    <text>Protein biosynthesis; polypeptide chain elongation.</text>
</comment>
<comment type="subcellular location">
    <subcellularLocation>
        <location evidence="1">Cytoplasm</location>
    </subcellularLocation>
</comment>
<comment type="similarity">
    <text evidence="2">Belongs to the elongation factor P family.</text>
</comment>
<proteinExistence type="inferred from homology"/>
<name>EFP1_LACJO</name>
<evidence type="ECO:0000250" key="1"/>
<evidence type="ECO:0000305" key="2"/>
<dbReference type="EMBL" id="AE017198">
    <property type="protein sequence ID" value="AAS09601.1"/>
    <property type="molecule type" value="Genomic_DNA"/>
</dbReference>
<dbReference type="RefSeq" id="WP_004897970.1">
    <property type="nucleotide sequence ID" value="NC_005362.1"/>
</dbReference>
<dbReference type="SMR" id="Q74HT9"/>
<dbReference type="KEGG" id="ljo:LJ_0620"/>
<dbReference type="eggNOG" id="COG0231">
    <property type="taxonomic scope" value="Bacteria"/>
</dbReference>
<dbReference type="HOGENOM" id="CLU_074944_3_0_9"/>
<dbReference type="UniPathway" id="UPA00345"/>
<dbReference type="Proteomes" id="UP000000581">
    <property type="component" value="Chromosome"/>
</dbReference>
<dbReference type="GO" id="GO:0005737">
    <property type="term" value="C:cytoplasm"/>
    <property type="evidence" value="ECO:0007669"/>
    <property type="project" value="UniProtKB-SubCell"/>
</dbReference>
<dbReference type="GO" id="GO:0003746">
    <property type="term" value="F:translation elongation factor activity"/>
    <property type="evidence" value="ECO:0007669"/>
    <property type="project" value="UniProtKB-UniRule"/>
</dbReference>
<dbReference type="GO" id="GO:0043043">
    <property type="term" value="P:peptide biosynthetic process"/>
    <property type="evidence" value="ECO:0007669"/>
    <property type="project" value="InterPro"/>
</dbReference>
<dbReference type="CDD" id="cd04470">
    <property type="entry name" value="S1_EF-P_repeat_1"/>
    <property type="match status" value="1"/>
</dbReference>
<dbReference type="CDD" id="cd05794">
    <property type="entry name" value="S1_EF-P_repeat_2"/>
    <property type="match status" value="1"/>
</dbReference>
<dbReference type="FunFam" id="2.30.30.30:FF:000003">
    <property type="entry name" value="Elongation factor P"/>
    <property type="match status" value="1"/>
</dbReference>
<dbReference type="FunFam" id="2.40.50.140:FF:000004">
    <property type="entry name" value="Elongation factor P"/>
    <property type="match status" value="1"/>
</dbReference>
<dbReference type="Gene3D" id="2.30.30.30">
    <property type="match status" value="1"/>
</dbReference>
<dbReference type="Gene3D" id="2.40.50.140">
    <property type="entry name" value="Nucleic acid-binding proteins"/>
    <property type="match status" value="2"/>
</dbReference>
<dbReference type="HAMAP" id="MF_00141">
    <property type="entry name" value="EF_P"/>
    <property type="match status" value="1"/>
</dbReference>
<dbReference type="InterPro" id="IPR015365">
    <property type="entry name" value="Elong-fact-P_C"/>
</dbReference>
<dbReference type="InterPro" id="IPR012340">
    <property type="entry name" value="NA-bd_OB-fold"/>
</dbReference>
<dbReference type="InterPro" id="IPR014722">
    <property type="entry name" value="Rib_uL2_dom2"/>
</dbReference>
<dbReference type="InterPro" id="IPR020599">
    <property type="entry name" value="Transl_elong_fac_P/YeiP"/>
</dbReference>
<dbReference type="InterPro" id="IPR013185">
    <property type="entry name" value="Transl_elong_KOW-like"/>
</dbReference>
<dbReference type="InterPro" id="IPR001059">
    <property type="entry name" value="Transl_elong_P/YeiP_cen"/>
</dbReference>
<dbReference type="InterPro" id="IPR013852">
    <property type="entry name" value="Transl_elong_P/YeiP_CS"/>
</dbReference>
<dbReference type="InterPro" id="IPR011768">
    <property type="entry name" value="Transl_elongation_fac_P"/>
</dbReference>
<dbReference type="InterPro" id="IPR008991">
    <property type="entry name" value="Translation_prot_SH3-like_sf"/>
</dbReference>
<dbReference type="NCBIfam" id="TIGR00038">
    <property type="entry name" value="efp"/>
    <property type="match status" value="1"/>
</dbReference>
<dbReference type="NCBIfam" id="NF001810">
    <property type="entry name" value="PRK00529.1"/>
    <property type="match status" value="1"/>
</dbReference>
<dbReference type="PANTHER" id="PTHR30053">
    <property type="entry name" value="ELONGATION FACTOR P"/>
    <property type="match status" value="1"/>
</dbReference>
<dbReference type="PANTHER" id="PTHR30053:SF12">
    <property type="entry name" value="ELONGATION FACTOR P (EF-P) FAMILY PROTEIN"/>
    <property type="match status" value="1"/>
</dbReference>
<dbReference type="Pfam" id="PF01132">
    <property type="entry name" value="EFP"/>
    <property type="match status" value="1"/>
</dbReference>
<dbReference type="Pfam" id="PF08207">
    <property type="entry name" value="EFP_N"/>
    <property type="match status" value="1"/>
</dbReference>
<dbReference type="Pfam" id="PF09285">
    <property type="entry name" value="Elong-fact-P_C"/>
    <property type="match status" value="1"/>
</dbReference>
<dbReference type="PIRSF" id="PIRSF005901">
    <property type="entry name" value="EF-P"/>
    <property type="match status" value="1"/>
</dbReference>
<dbReference type="SMART" id="SM01185">
    <property type="entry name" value="EFP"/>
    <property type="match status" value="1"/>
</dbReference>
<dbReference type="SMART" id="SM00841">
    <property type="entry name" value="Elong-fact-P_C"/>
    <property type="match status" value="1"/>
</dbReference>
<dbReference type="SUPFAM" id="SSF50249">
    <property type="entry name" value="Nucleic acid-binding proteins"/>
    <property type="match status" value="2"/>
</dbReference>
<dbReference type="SUPFAM" id="SSF50104">
    <property type="entry name" value="Translation proteins SH3-like domain"/>
    <property type="match status" value="1"/>
</dbReference>
<dbReference type="PROSITE" id="PS01275">
    <property type="entry name" value="EFP"/>
    <property type="match status" value="1"/>
</dbReference>
<organism>
    <name type="scientific">Lactobacillus johnsonii (strain CNCM I-12250 / La1 / NCC 533)</name>
    <dbReference type="NCBI Taxonomy" id="257314"/>
    <lineage>
        <taxon>Bacteria</taxon>
        <taxon>Bacillati</taxon>
        <taxon>Bacillota</taxon>
        <taxon>Bacilli</taxon>
        <taxon>Lactobacillales</taxon>
        <taxon>Lactobacillaceae</taxon>
        <taxon>Lactobacillus</taxon>
    </lineage>
</organism>